<sequence length="383" mass="43570">MSPEVALNRISPMLSPFISSVVRNGKVGLDATNCLRITDLKSGCTSLTPGPNCDRFKLHMPYAGETLKWDIIFNAQYPELPPDFIFGEDAEFLPDPSALQNLASWNPSNPECLLLVVKELVQQYHQFQCSRLRESSRLMFEYQTLLEEPQYGENMEIYAGKKNNWTGEFSARFLLKLPVDFSNIPTYLLKDVNEDPGEDVALLSVSFEDTEATQVYPKLYLSPRIEHALGGSSALHIPAFPGGGCLIDYVPQVCHLLTNKVQYVIQGYHKRREYIAAFLSHFGTGVVEYDAEGFTKLTLLLMWKDFCFLVHIDLPLFFPRDQPTLTFQSVYHFTNSGQLYSQAQKNYPYSPRWDGNEMAKRAKAYFKTFVPQFQEAAFANGKL</sequence>
<gene>
    <name type="primary">BABAM2</name>
    <name type="synonym">BRE</name>
</gene>
<evidence type="ECO:0000250" key="1">
    <source>
        <dbReference type="UniProtKB" id="Q9NXR7"/>
    </source>
</evidence>
<evidence type="ECO:0000255" key="2"/>
<protein>
    <recommendedName>
        <fullName>BRISC and BRCA1-A complex member 2</fullName>
    </recommendedName>
    <alternativeName>
        <fullName>BRCA1-A complex subunit BRE</fullName>
    </alternativeName>
    <alternativeName>
        <fullName>BRCA1/BRCA2-containing complex subunit 45</fullName>
    </alternativeName>
    <alternativeName>
        <fullName>Brain and reproductive organ-expressed protein</fullName>
    </alternativeName>
</protein>
<reference key="1">
    <citation type="submission" date="2004-11" db="EMBL/GenBank/DDBJ databases">
        <authorList>
            <consortium name="The German cDNA consortium"/>
        </authorList>
    </citation>
    <scope>NUCLEOTIDE SEQUENCE [LARGE SCALE MRNA]</scope>
    <source>
        <tissue>Kidney</tissue>
    </source>
</reference>
<keyword id="KW-0007">Acetylation</keyword>
<keyword id="KW-0053">Apoptosis</keyword>
<keyword id="KW-0131">Cell cycle</keyword>
<keyword id="KW-0132">Cell division</keyword>
<keyword id="KW-0156">Chromatin regulator</keyword>
<keyword id="KW-0963">Cytoplasm</keyword>
<keyword id="KW-0227">DNA damage</keyword>
<keyword id="KW-0234">DNA repair</keyword>
<keyword id="KW-0498">Mitosis</keyword>
<keyword id="KW-0539">Nucleus</keyword>
<keyword id="KW-0597">Phosphoprotein</keyword>
<keyword id="KW-1185">Reference proteome</keyword>
<keyword id="KW-0677">Repeat</keyword>
<keyword id="KW-0833">Ubl conjugation pathway</keyword>
<name>BABA2_PONAB</name>
<proteinExistence type="evidence at transcript level"/>
<dbReference type="EMBL" id="CR857384">
    <property type="protein sequence ID" value="CAH89678.1"/>
    <property type="molecule type" value="mRNA"/>
</dbReference>
<dbReference type="RefSeq" id="NP_001124759.1">
    <property type="nucleotide sequence ID" value="NM_001131287.2"/>
</dbReference>
<dbReference type="SMR" id="Q5REX9"/>
<dbReference type="FunCoup" id="Q5REX9">
    <property type="interactions" value="3059"/>
</dbReference>
<dbReference type="STRING" id="9601.ENSPPYP00000024716"/>
<dbReference type="GeneID" id="100171610"/>
<dbReference type="KEGG" id="pon:100171610"/>
<dbReference type="CTD" id="9577"/>
<dbReference type="eggNOG" id="ENOG502QUU0">
    <property type="taxonomic scope" value="Eukaryota"/>
</dbReference>
<dbReference type="InParanoid" id="Q5REX9"/>
<dbReference type="OrthoDB" id="538811at2759"/>
<dbReference type="Proteomes" id="UP000001595">
    <property type="component" value="Unplaced"/>
</dbReference>
<dbReference type="GO" id="GO:0070531">
    <property type="term" value="C:BRCA1-A complex"/>
    <property type="evidence" value="ECO:0000250"/>
    <property type="project" value="UniProtKB"/>
</dbReference>
<dbReference type="GO" id="GO:0070552">
    <property type="term" value="C:BRISC complex"/>
    <property type="evidence" value="ECO:0000250"/>
    <property type="project" value="UniProtKB"/>
</dbReference>
<dbReference type="GO" id="GO:0005737">
    <property type="term" value="C:cytoplasm"/>
    <property type="evidence" value="ECO:0000250"/>
    <property type="project" value="UniProtKB"/>
</dbReference>
<dbReference type="GO" id="GO:0005634">
    <property type="term" value="C:nucleus"/>
    <property type="evidence" value="ECO:0000250"/>
    <property type="project" value="UniProtKB"/>
</dbReference>
<dbReference type="GO" id="GO:0031593">
    <property type="term" value="F:polyubiquitin modification-dependent protein binding"/>
    <property type="evidence" value="ECO:0000250"/>
    <property type="project" value="UniProtKB"/>
</dbReference>
<dbReference type="GO" id="GO:0006915">
    <property type="term" value="P:apoptotic process"/>
    <property type="evidence" value="ECO:0007669"/>
    <property type="project" value="UniProtKB-KW"/>
</dbReference>
<dbReference type="GO" id="GO:0051301">
    <property type="term" value="P:cell division"/>
    <property type="evidence" value="ECO:0007669"/>
    <property type="project" value="UniProtKB-KW"/>
</dbReference>
<dbReference type="GO" id="GO:0006325">
    <property type="term" value="P:chromatin organization"/>
    <property type="evidence" value="ECO:0007669"/>
    <property type="project" value="UniProtKB-KW"/>
</dbReference>
<dbReference type="GO" id="GO:0006302">
    <property type="term" value="P:double-strand break repair"/>
    <property type="evidence" value="ECO:0000250"/>
    <property type="project" value="UniProtKB"/>
</dbReference>
<dbReference type="GO" id="GO:0007095">
    <property type="term" value="P:mitotic G2 DNA damage checkpoint signaling"/>
    <property type="evidence" value="ECO:0000250"/>
    <property type="project" value="UniProtKB"/>
</dbReference>
<dbReference type="GO" id="GO:0045739">
    <property type="term" value="P:positive regulation of DNA repair"/>
    <property type="evidence" value="ECO:0000250"/>
    <property type="project" value="UniProtKB"/>
</dbReference>
<dbReference type="GO" id="GO:0010212">
    <property type="term" value="P:response to ionizing radiation"/>
    <property type="evidence" value="ECO:0000250"/>
    <property type="project" value="UniProtKB"/>
</dbReference>
<dbReference type="CDD" id="cd23664">
    <property type="entry name" value="BRE"/>
    <property type="match status" value="1"/>
</dbReference>
<dbReference type="InterPro" id="IPR010358">
    <property type="entry name" value="BRE"/>
</dbReference>
<dbReference type="PANTHER" id="PTHR15189">
    <property type="entry name" value="BRISC AND BRCA1-A COMPLEX MEMBER 2"/>
    <property type="match status" value="1"/>
</dbReference>
<dbReference type="PANTHER" id="PTHR15189:SF7">
    <property type="entry name" value="BRISC AND BRCA1-A COMPLEX MEMBER 2"/>
    <property type="match status" value="1"/>
</dbReference>
<dbReference type="Pfam" id="PF06113">
    <property type="entry name" value="BRE"/>
    <property type="match status" value="1"/>
</dbReference>
<organism>
    <name type="scientific">Pongo abelii</name>
    <name type="common">Sumatran orangutan</name>
    <name type="synonym">Pongo pygmaeus abelii</name>
    <dbReference type="NCBI Taxonomy" id="9601"/>
    <lineage>
        <taxon>Eukaryota</taxon>
        <taxon>Metazoa</taxon>
        <taxon>Chordata</taxon>
        <taxon>Craniata</taxon>
        <taxon>Vertebrata</taxon>
        <taxon>Euteleostomi</taxon>
        <taxon>Mammalia</taxon>
        <taxon>Eutheria</taxon>
        <taxon>Euarchontoglires</taxon>
        <taxon>Primates</taxon>
        <taxon>Haplorrhini</taxon>
        <taxon>Catarrhini</taxon>
        <taxon>Hominidae</taxon>
        <taxon>Pongo</taxon>
    </lineage>
</organism>
<feature type="chain" id="PRO_0000373933" description="BRISC and BRCA1-A complex member 2">
    <location>
        <begin position="1"/>
        <end position="383"/>
    </location>
</feature>
<feature type="region of interest" description="UEV-like 1">
    <location>
        <begin position="30"/>
        <end position="147"/>
    </location>
</feature>
<feature type="region of interest" description="UEV-like 2">
    <location>
        <begin position="275"/>
        <end position="364"/>
    </location>
</feature>
<feature type="modified residue" description="N-acetylmethionine" evidence="1">
    <location>
        <position position="1"/>
    </location>
</feature>
<feature type="modified residue" description="Phosphoserine" evidence="1">
    <location>
        <position position="2"/>
    </location>
</feature>
<comment type="function">
    <text evidence="1">Component of the BRCA1-A complex, a complex that specifically recognizes 'Lys-63'-linked ubiquitinated histones H2A and H2AX at DNA lesions sites, leading to target the BRCA1-BARD1 heterodimer to sites of DNA damage at double-strand breaks (DSBs). The BRCA1-A complex also possesses deubiquitinase activity that specifically removes 'Lys-63'-linked ubiquitin on histones H2A and H2AX. In the BRCA1-A complex, it acts as an adapter that bridges the interaction between BABAM1/NBA1 and the rest of the complex, thereby being required for the complex integrity and modulating the E3 ubiquitin ligase activity of the BRCA1-BARD1 heterodimer. Component of the BRISC complex, a multiprotein complex that specifically cleaves 'Lys-63'-linked ubiquitin in various substrates. Within the BRISC complex, acts as an adapter that bridges the interaction between BABAM1/NBA1 and the rest of the complex, thereby being required for the complex integrity. The BRISC complex is required for normal mitotic spindle assembly and microtubule attachment to kinetochores via its role in deubiquitinating NUMA1. The BRISC complex plays a role in interferon signaling via its role in the deubiquitination of the interferon receptor IFNAR1; deubiquitination increases IFNAR1 activity by enhancing its stability and cell surface expression. Down-regulates the response to bacterial lipopolysaccharide (LPS) via its role in IFNAR1 deubiquitination. May play a role in homeostasis or cellular differentiation in cells of neural, epithelial and germline origins. May also act as a death receptor-associated anti-apoptotic protein, which inhibits the mitochondrial apoptotic pathway. May regulate TNF-alpha signaling through its interactions with TNFRSF1A; however these effects may be indirect.</text>
</comment>
<comment type="subunit">
    <text evidence="1">Component of the ARISC complex, at least composed of UIMC1/RAP80, ABRAXAS1, BRCC3/BRCC36, BABAM2 and BABAM1/NBA1. Component of the BRCA1-A complex, at least composed of BRCA1, BARD1, UIMC1/RAP80, ABRAXAS1, BRCC3/BRCC36, BABAM2 and BABAM1/NBA1. In the BRCA1-A complex, interacts directly with ABRAXAS1, BRCC3/BRCC36 and BABAM1/NBA1. Binds polyubiquitin. Component of the BRISC complex, at least composed of ABRAXAS2, BRCC3/BRCC36, BABAM2 and BABAM1/NBA1. Identified in a complex with SHMT2 and the other subunits of the BRISC complex. Component of the BRCA1/BRCA2 containing complex (BRCC), which also contains BRCA1, BRCA2, BARD1, BRCC3/BRCC36 and RAD51. BRCC is a ubiquitin E3 ligase complex that enhances cellular survival following DNA damage. May interact with FAS and TNFRSF1A.</text>
</comment>
<comment type="subcellular location">
    <subcellularLocation>
        <location evidence="1">Cytoplasm</location>
    </subcellularLocation>
    <subcellularLocation>
        <location evidence="1">Nucleus</location>
    </subcellularLocation>
    <text evidence="1">Localizes at sites of DNA damage at double-strand breaks (DSBs).</text>
</comment>
<comment type="domain">
    <text evidence="1">Contains 2 ubiquitin-conjugating enzyme family-like (UEV-like) regions. These regions lack the critical Cys residues required for ubiquitination but retain the ability to bind ubiquitin.</text>
</comment>
<comment type="similarity">
    <text evidence="2">Belongs to the BABAM2 family.</text>
</comment>
<accession>Q5REX9</accession>